<keyword id="KW-1185">Reference proteome</keyword>
<keyword id="KW-0687">Ribonucleoprotein</keyword>
<keyword id="KW-0689">Ribosomal protein</keyword>
<keyword id="KW-0694">RNA-binding</keyword>
<keyword id="KW-0699">rRNA-binding</keyword>
<accession>B2HCU0</accession>
<evidence type="ECO:0000255" key="1">
    <source>
        <dbReference type="HAMAP-Rule" id="MF_01341"/>
    </source>
</evidence>
<evidence type="ECO:0000256" key="2">
    <source>
        <dbReference type="SAM" id="MobiDB-lite"/>
    </source>
</evidence>
<evidence type="ECO:0000305" key="3"/>
<organism>
    <name type="scientific">Mycobacterium marinum (strain ATCC BAA-535 / M)</name>
    <dbReference type="NCBI Taxonomy" id="216594"/>
    <lineage>
        <taxon>Bacteria</taxon>
        <taxon>Bacillati</taxon>
        <taxon>Actinomycetota</taxon>
        <taxon>Actinomycetes</taxon>
        <taxon>Mycobacteriales</taxon>
        <taxon>Mycobacteriaceae</taxon>
        <taxon>Mycobacterium</taxon>
        <taxon>Mycobacterium ulcerans group</taxon>
    </lineage>
</organism>
<sequence length="146" mass="15622">MTIKLHDLRPAPGSKTPRTRVGRGEGSKGKTAGRGTKGTKARKQVPTTFEGGQMPIHMRLPKLKGFRNRFRTEYEIVNVGDIARLFPEGGTVGVDELVAKGAVRKNSLVKVLGDGKLTVKVDVTAHKFSGSAREQITAAGGSVTEL</sequence>
<reference key="1">
    <citation type="journal article" date="2008" name="Genome Res.">
        <title>Insights from the complete genome sequence of Mycobacterium marinum on the evolution of Mycobacterium tuberculosis.</title>
        <authorList>
            <person name="Stinear T.P."/>
            <person name="Seemann T."/>
            <person name="Harrison P.F."/>
            <person name="Jenkin G.A."/>
            <person name="Davies J.K."/>
            <person name="Johnson P.D."/>
            <person name="Abdellah Z."/>
            <person name="Arrowsmith C."/>
            <person name="Chillingworth T."/>
            <person name="Churcher C."/>
            <person name="Clarke K."/>
            <person name="Cronin A."/>
            <person name="Davis P."/>
            <person name="Goodhead I."/>
            <person name="Holroyd N."/>
            <person name="Jagels K."/>
            <person name="Lord A."/>
            <person name="Moule S."/>
            <person name="Mungall K."/>
            <person name="Norbertczak H."/>
            <person name="Quail M.A."/>
            <person name="Rabbinowitsch E."/>
            <person name="Walker D."/>
            <person name="White B."/>
            <person name="Whitehead S."/>
            <person name="Small P.L."/>
            <person name="Brosch R."/>
            <person name="Ramakrishnan L."/>
            <person name="Fischbach M.A."/>
            <person name="Parkhill J."/>
            <person name="Cole S.T."/>
        </authorList>
    </citation>
    <scope>NUCLEOTIDE SEQUENCE [LARGE SCALE GENOMIC DNA]</scope>
    <source>
        <strain>ATCC BAA-535 / M</strain>
    </source>
</reference>
<name>RL15_MYCMM</name>
<proteinExistence type="inferred from homology"/>
<comment type="function">
    <text evidence="1">Binds to the 23S rRNA.</text>
</comment>
<comment type="subunit">
    <text evidence="1">Part of the 50S ribosomal subunit.</text>
</comment>
<comment type="similarity">
    <text evidence="1">Belongs to the universal ribosomal protein uL15 family.</text>
</comment>
<dbReference type="EMBL" id="CP000854">
    <property type="protein sequence ID" value="ACC39512.1"/>
    <property type="molecule type" value="Genomic_DNA"/>
</dbReference>
<dbReference type="RefSeq" id="WP_012392952.1">
    <property type="nucleotide sequence ID" value="NC_010612.1"/>
</dbReference>
<dbReference type="SMR" id="B2HCU0"/>
<dbReference type="STRING" id="216594.MMAR_1054"/>
<dbReference type="KEGG" id="mmi:MMAR_1054"/>
<dbReference type="eggNOG" id="COG0200">
    <property type="taxonomic scope" value="Bacteria"/>
</dbReference>
<dbReference type="HOGENOM" id="CLU_055188_4_1_11"/>
<dbReference type="OrthoDB" id="9810293at2"/>
<dbReference type="Proteomes" id="UP000001190">
    <property type="component" value="Chromosome"/>
</dbReference>
<dbReference type="GO" id="GO:0022625">
    <property type="term" value="C:cytosolic large ribosomal subunit"/>
    <property type="evidence" value="ECO:0007669"/>
    <property type="project" value="TreeGrafter"/>
</dbReference>
<dbReference type="GO" id="GO:0019843">
    <property type="term" value="F:rRNA binding"/>
    <property type="evidence" value="ECO:0007669"/>
    <property type="project" value="UniProtKB-UniRule"/>
</dbReference>
<dbReference type="GO" id="GO:0003735">
    <property type="term" value="F:structural constituent of ribosome"/>
    <property type="evidence" value="ECO:0007669"/>
    <property type="project" value="InterPro"/>
</dbReference>
<dbReference type="GO" id="GO:0006412">
    <property type="term" value="P:translation"/>
    <property type="evidence" value="ECO:0007669"/>
    <property type="project" value="UniProtKB-UniRule"/>
</dbReference>
<dbReference type="FunFam" id="3.100.10.10:FF:000005">
    <property type="entry name" value="50S ribosomal protein L15"/>
    <property type="match status" value="1"/>
</dbReference>
<dbReference type="Gene3D" id="3.100.10.10">
    <property type="match status" value="1"/>
</dbReference>
<dbReference type="HAMAP" id="MF_01341">
    <property type="entry name" value="Ribosomal_uL15"/>
    <property type="match status" value="1"/>
</dbReference>
<dbReference type="InterPro" id="IPR030878">
    <property type="entry name" value="Ribosomal_uL15"/>
</dbReference>
<dbReference type="InterPro" id="IPR021131">
    <property type="entry name" value="Ribosomal_uL15/eL18"/>
</dbReference>
<dbReference type="InterPro" id="IPR036227">
    <property type="entry name" value="Ribosomal_uL15/eL18_sf"/>
</dbReference>
<dbReference type="InterPro" id="IPR005749">
    <property type="entry name" value="Ribosomal_uL15_bac-type"/>
</dbReference>
<dbReference type="InterPro" id="IPR001196">
    <property type="entry name" value="Ribosomal_uL15_CS"/>
</dbReference>
<dbReference type="NCBIfam" id="TIGR01071">
    <property type="entry name" value="rplO_bact"/>
    <property type="match status" value="1"/>
</dbReference>
<dbReference type="PANTHER" id="PTHR12934">
    <property type="entry name" value="50S RIBOSOMAL PROTEIN L15"/>
    <property type="match status" value="1"/>
</dbReference>
<dbReference type="PANTHER" id="PTHR12934:SF11">
    <property type="entry name" value="LARGE RIBOSOMAL SUBUNIT PROTEIN UL15M"/>
    <property type="match status" value="1"/>
</dbReference>
<dbReference type="Pfam" id="PF00828">
    <property type="entry name" value="Ribosomal_L27A"/>
    <property type="match status" value="1"/>
</dbReference>
<dbReference type="SUPFAM" id="SSF52080">
    <property type="entry name" value="Ribosomal proteins L15p and L18e"/>
    <property type="match status" value="1"/>
</dbReference>
<dbReference type="PROSITE" id="PS00475">
    <property type="entry name" value="RIBOSOMAL_L15"/>
    <property type="match status" value="1"/>
</dbReference>
<feature type="chain" id="PRO_1000142847" description="Large ribosomal subunit protein uL15">
    <location>
        <begin position="1"/>
        <end position="146"/>
    </location>
</feature>
<feature type="region of interest" description="Disordered" evidence="2">
    <location>
        <begin position="1"/>
        <end position="54"/>
    </location>
</feature>
<gene>
    <name evidence="1" type="primary">rplO</name>
    <name type="ordered locus">MMAR_1054</name>
</gene>
<protein>
    <recommendedName>
        <fullName evidence="1">Large ribosomal subunit protein uL15</fullName>
    </recommendedName>
    <alternativeName>
        <fullName evidence="3">50S ribosomal protein L15</fullName>
    </alternativeName>
</protein>